<accession>Q1CD03</accession>
<accession>D1Q2G0</accession>
<reference key="1">
    <citation type="journal article" date="2006" name="J. Bacteriol.">
        <title>Complete genome sequence of Yersinia pestis strains Antiqua and Nepal516: evidence of gene reduction in an emerging pathogen.</title>
        <authorList>
            <person name="Chain P.S.G."/>
            <person name="Hu P."/>
            <person name="Malfatti S.A."/>
            <person name="Radnedge L."/>
            <person name="Larimer F."/>
            <person name="Vergez L.M."/>
            <person name="Worsham P."/>
            <person name="Chu M.C."/>
            <person name="Andersen G.L."/>
        </authorList>
    </citation>
    <scope>NUCLEOTIDE SEQUENCE [LARGE SCALE GENOMIC DNA]</scope>
    <source>
        <strain>Nepal516</strain>
    </source>
</reference>
<reference key="2">
    <citation type="submission" date="2009-04" db="EMBL/GenBank/DDBJ databases">
        <title>Yersinia pestis Nepal516A whole genome shotgun sequencing project.</title>
        <authorList>
            <person name="Plunkett G. III"/>
            <person name="Anderson B.D."/>
            <person name="Baumler D.J."/>
            <person name="Burland V."/>
            <person name="Cabot E.L."/>
            <person name="Glasner J.D."/>
            <person name="Mau B."/>
            <person name="Neeno-Eckwall E."/>
            <person name="Perna N.T."/>
            <person name="Munk A.C."/>
            <person name="Tapia R."/>
            <person name="Green L.D."/>
            <person name="Rogers Y.C."/>
            <person name="Detter J.C."/>
            <person name="Bruce D.C."/>
            <person name="Brettin T.S."/>
        </authorList>
    </citation>
    <scope>NUCLEOTIDE SEQUENCE [LARGE SCALE GENOMIC DNA]</scope>
    <source>
        <strain>Nepal516</strain>
    </source>
</reference>
<proteinExistence type="inferred from homology"/>
<organism>
    <name type="scientific">Yersinia pestis bv. Antiqua (strain Nepal516)</name>
    <dbReference type="NCBI Taxonomy" id="377628"/>
    <lineage>
        <taxon>Bacteria</taxon>
        <taxon>Pseudomonadati</taxon>
        <taxon>Pseudomonadota</taxon>
        <taxon>Gammaproteobacteria</taxon>
        <taxon>Enterobacterales</taxon>
        <taxon>Yersiniaceae</taxon>
        <taxon>Yersinia</taxon>
    </lineage>
</organism>
<evidence type="ECO:0000255" key="1">
    <source>
        <dbReference type="HAMAP-Rule" id="MF_00373"/>
    </source>
</evidence>
<evidence type="ECO:0000256" key="2">
    <source>
        <dbReference type="SAM" id="MobiDB-lite"/>
    </source>
</evidence>
<evidence type="ECO:0000305" key="3"/>
<sequence>MSRVCQVTGKRPMSGNNRSHAMNATKRRFLPNLHSHRFWVEGEKRFVTLRVSAKGMRVIDKKGIETVLAEIRARGEKY</sequence>
<feature type="chain" id="PRO_1000007406" description="Large ribosomal subunit protein bL28">
    <location>
        <begin position="1"/>
        <end position="78"/>
    </location>
</feature>
<feature type="region of interest" description="Disordered" evidence="2">
    <location>
        <begin position="1"/>
        <end position="22"/>
    </location>
</feature>
<protein>
    <recommendedName>
        <fullName evidence="1">Large ribosomal subunit protein bL28</fullName>
    </recommendedName>
    <alternativeName>
        <fullName evidence="3">50S ribosomal protein L28</fullName>
    </alternativeName>
</protein>
<comment type="similarity">
    <text evidence="1">Belongs to the bacterial ribosomal protein bL28 family.</text>
</comment>
<dbReference type="EMBL" id="CP000305">
    <property type="protein sequence ID" value="ABG20127.1"/>
    <property type="molecule type" value="Genomic_DNA"/>
</dbReference>
<dbReference type="EMBL" id="ACNQ01000019">
    <property type="protein sequence ID" value="EEO74713.1"/>
    <property type="molecule type" value="Genomic_DNA"/>
</dbReference>
<dbReference type="RefSeq" id="WP_002208991.1">
    <property type="nucleotide sequence ID" value="NZ_ACNQ01000019.1"/>
</dbReference>
<dbReference type="SMR" id="Q1CD03"/>
<dbReference type="GeneID" id="96663531"/>
<dbReference type="KEGG" id="ypn:YPN_3800"/>
<dbReference type="HOGENOM" id="CLU_064548_3_1_6"/>
<dbReference type="Proteomes" id="UP000008936">
    <property type="component" value="Chromosome"/>
</dbReference>
<dbReference type="GO" id="GO:1990904">
    <property type="term" value="C:ribonucleoprotein complex"/>
    <property type="evidence" value="ECO:0007669"/>
    <property type="project" value="UniProtKB-KW"/>
</dbReference>
<dbReference type="GO" id="GO:0005840">
    <property type="term" value="C:ribosome"/>
    <property type="evidence" value="ECO:0007669"/>
    <property type="project" value="UniProtKB-KW"/>
</dbReference>
<dbReference type="GO" id="GO:0003735">
    <property type="term" value="F:structural constituent of ribosome"/>
    <property type="evidence" value="ECO:0007669"/>
    <property type="project" value="InterPro"/>
</dbReference>
<dbReference type="GO" id="GO:0006412">
    <property type="term" value="P:translation"/>
    <property type="evidence" value="ECO:0007669"/>
    <property type="project" value="UniProtKB-UniRule"/>
</dbReference>
<dbReference type="FunFam" id="2.30.170.40:FF:000001">
    <property type="entry name" value="50S ribosomal protein L28"/>
    <property type="match status" value="1"/>
</dbReference>
<dbReference type="Gene3D" id="2.30.170.40">
    <property type="entry name" value="Ribosomal protein L28/L24"/>
    <property type="match status" value="1"/>
</dbReference>
<dbReference type="HAMAP" id="MF_00373">
    <property type="entry name" value="Ribosomal_bL28"/>
    <property type="match status" value="1"/>
</dbReference>
<dbReference type="InterPro" id="IPR050096">
    <property type="entry name" value="Bacterial_rp_bL28"/>
</dbReference>
<dbReference type="InterPro" id="IPR026569">
    <property type="entry name" value="Ribosomal_bL28"/>
</dbReference>
<dbReference type="InterPro" id="IPR034704">
    <property type="entry name" value="Ribosomal_bL28/bL31-like_sf"/>
</dbReference>
<dbReference type="InterPro" id="IPR001383">
    <property type="entry name" value="Ribosomal_bL28_bact-type"/>
</dbReference>
<dbReference type="InterPro" id="IPR037147">
    <property type="entry name" value="Ribosomal_bL28_sf"/>
</dbReference>
<dbReference type="NCBIfam" id="TIGR00009">
    <property type="entry name" value="L28"/>
    <property type="match status" value="1"/>
</dbReference>
<dbReference type="PANTHER" id="PTHR39080">
    <property type="entry name" value="50S RIBOSOMAL PROTEIN L28"/>
    <property type="match status" value="1"/>
</dbReference>
<dbReference type="PANTHER" id="PTHR39080:SF1">
    <property type="entry name" value="LARGE RIBOSOMAL SUBUNIT PROTEIN BL28A"/>
    <property type="match status" value="1"/>
</dbReference>
<dbReference type="Pfam" id="PF00830">
    <property type="entry name" value="Ribosomal_L28"/>
    <property type="match status" value="1"/>
</dbReference>
<dbReference type="SUPFAM" id="SSF143800">
    <property type="entry name" value="L28p-like"/>
    <property type="match status" value="1"/>
</dbReference>
<gene>
    <name evidence="1" type="primary">rpmB</name>
    <name type="ordered locus">YPN_3800</name>
    <name type="ORF">YP516_4320</name>
</gene>
<name>RL28_YERPN</name>
<keyword id="KW-0687">Ribonucleoprotein</keyword>
<keyword id="KW-0689">Ribosomal protein</keyword>